<sequence>MFASGHTTPRLGIDLAGGTSITLRAVPEAGQESAINKTNMDTAVEIMNRRVNGLGVSEAEVQTQGDRNIIVYIPKGTNSKEARQQVGTTAKLYFRPVLATELSGANATGTPSASETGGASDKATDKATDKATDKATDGDKATDGDKASGTPSDSASASATSQGRAASDALKADPSPSATSSDGASPSPSASASGDDATAKLQQQYAALDCTDKNARAKAGDGAKPDEQTVACGQNSQGQWQKYILGAAAVDGTEVDEAEAVYNTQTAAGWTVTMKFTDKGSKKFADITGKLAQNQSPQNQFAIVLDNEVVSDPYVSQALTGGNAEISGSFDQEEAQSLANMLSYGALPLTFKEDSVTTVTAALGGEQLKAGLIAGAIGLALVVLYLLFYYRGLSFIAVCSLLVSAGLTYVIMALLGPTIGFALNLPAVCGAIVAIGITADSFIVYFERVRDEIREGRTLRPAVERAWPRARRTILVSDFVSFLAAAVLFIVTVGKVQGFAFTLGLTTLLDVVVVFLFTKPLLTLMARRKFFASGHKWSGLDPKALGAKPPLRRTRRPSRPAAGPVDPKEA</sequence>
<reference key="1">
    <citation type="submission" date="1995-03" db="EMBL/GenBank/DDBJ databases">
        <authorList>
            <person name="Loriaux A."/>
            <person name="Frare P."/>
            <person name="Brans A."/>
            <person name="Dusart J."/>
        </authorList>
    </citation>
    <scope>NUCLEOTIDE SEQUENCE [GENOMIC DNA]</scope>
    <source>
        <strain>A3(2) / NRRL B-16638</strain>
    </source>
</reference>
<reference key="2">
    <citation type="journal article" date="2002" name="Nature">
        <title>Complete genome sequence of the model actinomycete Streptomyces coelicolor A3(2).</title>
        <authorList>
            <person name="Bentley S.D."/>
            <person name="Chater K.F."/>
            <person name="Cerdeno-Tarraga A.-M."/>
            <person name="Challis G.L."/>
            <person name="Thomson N.R."/>
            <person name="James K.D."/>
            <person name="Harris D.E."/>
            <person name="Quail M.A."/>
            <person name="Kieser H."/>
            <person name="Harper D."/>
            <person name="Bateman A."/>
            <person name="Brown S."/>
            <person name="Chandra G."/>
            <person name="Chen C.W."/>
            <person name="Collins M."/>
            <person name="Cronin A."/>
            <person name="Fraser A."/>
            <person name="Goble A."/>
            <person name="Hidalgo J."/>
            <person name="Hornsby T."/>
            <person name="Howarth S."/>
            <person name="Huang C.-H."/>
            <person name="Kieser T."/>
            <person name="Larke L."/>
            <person name="Murphy L.D."/>
            <person name="Oliver K."/>
            <person name="O'Neil S."/>
            <person name="Rabbinowitsch E."/>
            <person name="Rajandream M.A."/>
            <person name="Rutherford K.M."/>
            <person name="Rutter S."/>
            <person name="Seeger K."/>
            <person name="Saunders D."/>
            <person name="Sharp S."/>
            <person name="Squares R."/>
            <person name="Squares S."/>
            <person name="Taylor K."/>
            <person name="Warren T."/>
            <person name="Wietzorrek A."/>
            <person name="Woodward J.R."/>
            <person name="Barrell B.G."/>
            <person name="Parkhill J."/>
            <person name="Hopwood D.A."/>
        </authorList>
    </citation>
    <scope>NUCLEOTIDE SEQUENCE [LARGE SCALE GENOMIC DNA]</scope>
    <source>
        <strain>ATCC BAA-471 / A3(2) / M145</strain>
    </source>
</reference>
<evidence type="ECO:0000255" key="1">
    <source>
        <dbReference type="HAMAP-Rule" id="MF_01463"/>
    </source>
</evidence>
<evidence type="ECO:0000256" key="2">
    <source>
        <dbReference type="SAM" id="MobiDB-lite"/>
    </source>
</evidence>
<evidence type="ECO:0000305" key="3"/>
<name>SECD_STRCO</name>
<gene>
    <name evidence="1" type="primary">secD</name>
    <name type="ordered locus">SCO1516</name>
    <name type="ORF">SCL2.06c</name>
</gene>
<organism>
    <name type="scientific">Streptomyces coelicolor (strain ATCC BAA-471 / A3(2) / M145)</name>
    <dbReference type="NCBI Taxonomy" id="100226"/>
    <lineage>
        <taxon>Bacteria</taxon>
        <taxon>Bacillati</taxon>
        <taxon>Actinomycetota</taxon>
        <taxon>Actinomycetes</taxon>
        <taxon>Kitasatosporales</taxon>
        <taxon>Streptomycetaceae</taxon>
        <taxon>Streptomyces</taxon>
        <taxon>Streptomyces albidoflavus group</taxon>
    </lineage>
</organism>
<accession>Q53955</accession>
<accession>Q9L293</accession>
<protein>
    <recommendedName>
        <fullName evidence="1">Protein translocase subunit SecD</fullName>
    </recommendedName>
</protein>
<feature type="chain" id="PRO_0000095971" description="Protein translocase subunit SecD">
    <location>
        <begin position="1"/>
        <end position="570"/>
    </location>
</feature>
<feature type="transmembrane region" description="Helical" evidence="1">
    <location>
        <begin position="370"/>
        <end position="390"/>
    </location>
</feature>
<feature type="transmembrane region" description="Helical" evidence="1">
    <location>
        <begin position="395"/>
        <end position="415"/>
    </location>
</feature>
<feature type="transmembrane region" description="Helical" evidence="1">
    <location>
        <begin position="419"/>
        <end position="439"/>
    </location>
</feature>
<feature type="transmembrane region" description="Helical" evidence="1">
    <location>
        <begin position="474"/>
        <end position="494"/>
    </location>
</feature>
<feature type="transmembrane region" description="Helical" evidence="1">
    <location>
        <begin position="498"/>
        <end position="518"/>
    </location>
</feature>
<feature type="region of interest" description="Disordered" evidence="2">
    <location>
        <begin position="104"/>
        <end position="198"/>
    </location>
</feature>
<feature type="region of interest" description="Disordered" evidence="2">
    <location>
        <begin position="540"/>
        <end position="570"/>
    </location>
</feature>
<feature type="compositionally biased region" description="Polar residues" evidence="2">
    <location>
        <begin position="104"/>
        <end position="117"/>
    </location>
</feature>
<feature type="compositionally biased region" description="Basic and acidic residues" evidence="2">
    <location>
        <begin position="122"/>
        <end position="146"/>
    </location>
</feature>
<feature type="compositionally biased region" description="Low complexity" evidence="2">
    <location>
        <begin position="147"/>
        <end position="161"/>
    </location>
</feature>
<feature type="compositionally biased region" description="Low complexity" evidence="2">
    <location>
        <begin position="172"/>
        <end position="196"/>
    </location>
</feature>
<feature type="sequence conflict" description="In Ref. 1; CAA59954." evidence="3" ref="1">
    <original>Y</original>
    <variation>N</variation>
    <location>
        <position position="72"/>
    </location>
</feature>
<feature type="sequence conflict" description="In Ref. 1; CAA59954." evidence="3" ref="1">
    <original>S</original>
    <variation>K</variation>
    <location>
        <position position="191"/>
    </location>
</feature>
<feature type="sequence conflict" description="In Ref. 1; CAA59954." evidence="3" ref="1">
    <original>PL</original>
    <variation>SV</variation>
    <location>
        <begin position="550"/>
        <end position="551"/>
    </location>
</feature>
<proteinExistence type="inferred from homology"/>
<keyword id="KW-1003">Cell membrane</keyword>
<keyword id="KW-0472">Membrane</keyword>
<keyword id="KW-0653">Protein transport</keyword>
<keyword id="KW-1185">Reference proteome</keyword>
<keyword id="KW-0811">Translocation</keyword>
<keyword id="KW-0812">Transmembrane</keyword>
<keyword id="KW-1133">Transmembrane helix</keyword>
<keyword id="KW-0813">Transport</keyword>
<dbReference type="EMBL" id="X85969">
    <property type="protein sequence ID" value="CAA59954.1"/>
    <property type="molecule type" value="Genomic_DNA"/>
</dbReference>
<dbReference type="EMBL" id="AL939109">
    <property type="protein sequence ID" value="CAB70918.1"/>
    <property type="molecule type" value="Genomic_DNA"/>
</dbReference>
<dbReference type="PIR" id="S52765">
    <property type="entry name" value="S52765"/>
</dbReference>
<dbReference type="RefSeq" id="NP_625795.1">
    <property type="nucleotide sequence ID" value="NC_003888.3"/>
</dbReference>
<dbReference type="SMR" id="Q53955"/>
<dbReference type="STRING" id="100226.gene:17759102"/>
<dbReference type="PaxDb" id="100226-SCO1516"/>
<dbReference type="KEGG" id="sco:SCO1516"/>
<dbReference type="PATRIC" id="fig|100226.15.peg.1525"/>
<dbReference type="eggNOG" id="COG0342">
    <property type="taxonomic scope" value="Bacteria"/>
</dbReference>
<dbReference type="HOGENOM" id="CLU_007894_4_2_11"/>
<dbReference type="InParanoid" id="Q53955"/>
<dbReference type="OrthoDB" id="5240379at2"/>
<dbReference type="PhylomeDB" id="Q53955"/>
<dbReference type="Proteomes" id="UP000001973">
    <property type="component" value="Chromosome"/>
</dbReference>
<dbReference type="GO" id="GO:0005886">
    <property type="term" value="C:plasma membrane"/>
    <property type="evidence" value="ECO:0000318"/>
    <property type="project" value="GO_Central"/>
</dbReference>
<dbReference type="GO" id="GO:0015450">
    <property type="term" value="F:protein-transporting ATPase activity"/>
    <property type="evidence" value="ECO:0007669"/>
    <property type="project" value="InterPro"/>
</dbReference>
<dbReference type="GO" id="GO:0065002">
    <property type="term" value="P:intracellular protein transmembrane transport"/>
    <property type="evidence" value="ECO:0007669"/>
    <property type="project" value="UniProtKB-UniRule"/>
</dbReference>
<dbReference type="GO" id="GO:0006605">
    <property type="term" value="P:protein targeting"/>
    <property type="evidence" value="ECO:0007669"/>
    <property type="project" value="UniProtKB-UniRule"/>
</dbReference>
<dbReference type="GO" id="GO:0015031">
    <property type="term" value="P:protein transport"/>
    <property type="evidence" value="ECO:0000318"/>
    <property type="project" value="GO_Central"/>
</dbReference>
<dbReference type="GO" id="GO:0043952">
    <property type="term" value="P:protein transport by the Sec complex"/>
    <property type="evidence" value="ECO:0007669"/>
    <property type="project" value="UniProtKB-UniRule"/>
</dbReference>
<dbReference type="FunFam" id="1.20.1640.10:FF:000014">
    <property type="entry name" value="Protein translocase subunit SecD"/>
    <property type="match status" value="1"/>
</dbReference>
<dbReference type="FunFam" id="3.30.1360.200:FF:000010">
    <property type="entry name" value="Protein translocase subunit SecD"/>
    <property type="match status" value="1"/>
</dbReference>
<dbReference type="FunFam" id="3.30.70.3220:FF:000004">
    <property type="entry name" value="Protein translocase subunit SecD"/>
    <property type="match status" value="1"/>
</dbReference>
<dbReference type="Gene3D" id="3.30.1360.200">
    <property type="match status" value="1"/>
</dbReference>
<dbReference type="Gene3D" id="3.30.70.3220">
    <property type="match status" value="1"/>
</dbReference>
<dbReference type="Gene3D" id="1.20.1640.10">
    <property type="entry name" value="Multidrug efflux transporter AcrB transmembrane domain"/>
    <property type="match status" value="1"/>
</dbReference>
<dbReference type="HAMAP" id="MF_01463_B">
    <property type="entry name" value="SecD_B"/>
    <property type="match status" value="1"/>
</dbReference>
<dbReference type="InterPro" id="IPR005791">
    <property type="entry name" value="SecD"/>
</dbReference>
<dbReference type="InterPro" id="IPR022813">
    <property type="entry name" value="SecD/SecF_arch_bac"/>
</dbReference>
<dbReference type="InterPro" id="IPR022646">
    <property type="entry name" value="SecD/SecF_CS"/>
</dbReference>
<dbReference type="InterPro" id="IPR048631">
    <property type="entry name" value="SecD_1st"/>
</dbReference>
<dbReference type="InterPro" id="IPR048634">
    <property type="entry name" value="SecD_SecF_C"/>
</dbReference>
<dbReference type="InterPro" id="IPR055344">
    <property type="entry name" value="SecD_SecF_C_bact"/>
</dbReference>
<dbReference type="InterPro" id="IPR054384">
    <property type="entry name" value="SecDF_P1_head"/>
</dbReference>
<dbReference type="NCBIfam" id="TIGR00916">
    <property type="entry name" value="2A0604s01"/>
    <property type="match status" value="1"/>
</dbReference>
<dbReference type="NCBIfam" id="TIGR01129">
    <property type="entry name" value="secD"/>
    <property type="match status" value="1"/>
</dbReference>
<dbReference type="PANTHER" id="PTHR30081:SF1">
    <property type="entry name" value="PROTEIN TRANSLOCASE SUBUNIT SECD"/>
    <property type="match status" value="1"/>
</dbReference>
<dbReference type="PANTHER" id="PTHR30081">
    <property type="entry name" value="PROTEIN-EXPORT MEMBRANE PROTEIN SEC"/>
    <property type="match status" value="1"/>
</dbReference>
<dbReference type="Pfam" id="PF07549">
    <property type="entry name" value="Sec_GG"/>
    <property type="match status" value="1"/>
</dbReference>
<dbReference type="Pfam" id="PF21760">
    <property type="entry name" value="SecD_1st"/>
    <property type="match status" value="1"/>
</dbReference>
<dbReference type="Pfam" id="PF02355">
    <property type="entry name" value="SecD_SecF_C"/>
    <property type="match status" value="1"/>
</dbReference>
<dbReference type="Pfam" id="PF22599">
    <property type="entry name" value="SecDF_P1_head"/>
    <property type="match status" value="1"/>
</dbReference>
<dbReference type="SUPFAM" id="SSF82866">
    <property type="entry name" value="Multidrug efflux transporter AcrB transmembrane domain"/>
    <property type="match status" value="1"/>
</dbReference>
<comment type="function">
    <text evidence="1">Part of the Sec protein translocase complex. Interacts with the SecYEG preprotein conducting channel. SecDF uses the proton motive force (PMF) to complete protein translocation after the ATP-dependent function of SecA.</text>
</comment>
<comment type="subunit">
    <text evidence="1">Forms a complex with SecF. Part of the essential Sec protein translocation apparatus which comprises SecA, SecYEG and auxiliary proteins SecDF. Other proteins may also be involved.</text>
</comment>
<comment type="subcellular location">
    <subcellularLocation>
        <location evidence="1">Cell membrane</location>
        <topology evidence="1">Multi-pass membrane protein</topology>
    </subcellularLocation>
</comment>
<comment type="similarity">
    <text evidence="1">Belongs to the SecD/SecF family. SecD subfamily.</text>
</comment>